<dbReference type="EMBL" id="AE000782">
    <property type="protein sequence ID" value="AAB89700.1"/>
    <property type="molecule type" value="Genomic_DNA"/>
</dbReference>
<dbReference type="PIR" id="B69444">
    <property type="entry name" value="B69444"/>
</dbReference>
<dbReference type="STRING" id="224325.AF_1555"/>
<dbReference type="PaxDb" id="224325-AF_1555"/>
<dbReference type="EnsemblBacteria" id="AAB89700">
    <property type="protein sequence ID" value="AAB89700"/>
    <property type="gene ID" value="AF_1555"/>
</dbReference>
<dbReference type="KEGG" id="afu:AF_1555"/>
<dbReference type="HOGENOM" id="CLU_2366039_0_0_2"/>
<dbReference type="Proteomes" id="UP000002199">
    <property type="component" value="Chromosome"/>
</dbReference>
<gene>
    <name type="ordered locus">AF_1555</name>
</gene>
<sequence>MNRIFCALMRADAARFREVVFPCALLQNHPHQFPHVLARLEFFAPPDQRNCLLLPRVLVKRSLAAKEPSKVNFLSVNLRKELHEEAKSSKKTNLK</sequence>
<keyword id="KW-1185">Reference proteome</keyword>
<protein>
    <recommendedName>
        <fullName>Uncharacterized protein AF_1555</fullName>
    </recommendedName>
</protein>
<proteinExistence type="predicted"/>
<organism>
    <name type="scientific">Archaeoglobus fulgidus (strain ATCC 49558 / DSM 4304 / JCM 9628 / NBRC 100126 / VC-16)</name>
    <dbReference type="NCBI Taxonomy" id="224325"/>
    <lineage>
        <taxon>Archaea</taxon>
        <taxon>Methanobacteriati</taxon>
        <taxon>Methanobacteriota</taxon>
        <taxon>Archaeoglobi</taxon>
        <taxon>Archaeoglobales</taxon>
        <taxon>Archaeoglobaceae</taxon>
        <taxon>Archaeoglobus</taxon>
    </lineage>
</organism>
<name>Y1555_ARCFU</name>
<feature type="chain" id="PRO_0000128020" description="Uncharacterized protein AF_1555">
    <location>
        <begin position="1"/>
        <end position="95"/>
    </location>
</feature>
<accession>O28717</accession>
<reference key="1">
    <citation type="journal article" date="1997" name="Nature">
        <title>The complete genome sequence of the hyperthermophilic, sulphate-reducing archaeon Archaeoglobus fulgidus.</title>
        <authorList>
            <person name="Klenk H.-P."/>
            <person name="Clayton R.A."/>
            <person name="Tomb J.-F."/>
            <person name="White O."/>
            <person name="Nelson K.E."/>
            <person name="Ketchum K.A."/>
            <person name="Dodson R.J."/>
            <person name="Gwinn M.L."/>
            <person name="Hickey E.K."/>
            <person name="Peterson J.D."/>
            <person name="Richardson D.L."/>
            <person name="Kerlavage A.R."/>
            <person name="Graham D.E."/>
            <person name="Kyrpides N.C."/>
            <person name="Fleischmann R.D."/>
            <person name="Quackenbush J."/>
            <person name="Lee N.H."/>
            <person name="Sutton G.G."/>
            <person name="Gill S.R."/>
            <person name="Kirkness E.F."/>
            <person name="Dougherty B.A."/>
            <person name="McKenney K."/>
            <person name="Adams M.D."/>
            <person name="Loftus B.J."/>
            <person name="Peterson S.N."/>
            <person name="Reich C.I."/>
            <person name="McNeil L.K."/>
            <person name="Badger J.H."/>
            <person name="Glodek A."/>
            <person name="Zhou L."/>
            <person name="Overbeek R."/>
            <person name="Gocayne J.D."/>
            <person name="Weidman J.F."/>
            <person name="McDonald L.A."/>
            <person name="Utterback T.R."/>
            <person name="Cotton M.D."/>
            <person name="Spriggs T."/>
            <person name="Artiach P."/>
            <person name="Kaine B.P."/>
            <person name="Sykes S.M."/>
            <person name="Sadow P.W."/>
            <person name="D'Andrea K.P."/>
            <person name="Bowman C."/>
            <person name="Fujii C."/>
            <person name="Garland S.A."/>
            <person name="Mason T.M."/>
            <person name="Olsen G.J."/>
            <person name="Fraser C.M."/>
            <person name="Smith H.O."/>
            <person name="Woese C.R."/>
            <person name="Venter J.C."/>
        </authorList>
    </citation>
    <scope>NUCLEOTIDE SEQUENCE [LARGE SCALE GENOMIC DNA]</scope>
    <source>
        <strain>ATCC 49558 / DSM 4304 / JCM 9628 / NBRC 100126 / VC-16</strain>
    </source>
</reference>